<proteinExistence type="inferred from homology"/>
<protein>
    <recommendedName>
        <fullName evidence="1">Large ribosomal subunit protein bL17</fullName>
    </recommendedName>
    <alternativeName>
        <fullName evidence="2">50S ribosomal protein L17</fullName>
    </alternativeName>
</protein>
<sequence>MGYRKLGRTSDQRKAMLRDLATSLIISERIETTEARAKEVRSVVEKLITLGKKGDLASRRNAAKTLRNVEILNEDETTQTALQKLFGEIAERYTERQGGYTRILKQGPRRGDGAESVIIELV</sequence>
<reference key="1">
    <citation type="submission" date="2007-05" db="EMBL/GenBank/DDBJ databases">
        <title>Complete sequence of chromosome of Staphylococcus aureus subsp. aureus JH9.</title>
        <authorList>
            <consortium name="US DOE Joint Genome Institute"/>
            <person name="Copeland A."/>
            <person name="Lucas S."/>
            <person name="Lapidus A."/>
            <person name="Barry K."/>
            <person name="Detter J.C."/>
            <person name="Glavina del Rio T."/>
            <person name="Hammon N."/>
            <person name="Israni S."/>
            <person name="Pitluck S."/>
            <person name="Chain P."/>
            <person name="Malfatti S."/>
            <person name="Shin M."/>
            <person name="Vergez L."/>
            <person name="Schmutz J."/>
            <person name="Larimer F."/>
            <person name="Land M."/>
            <person name="Hauser L."/>
            <person name="Kyrpides N."/>
            <person name="Kim E."/>
            <person name="Tomasz A."/>
            <person name="Richardson P."/>
        </authorList>
    </citation>
    <scope>NUCLEOTIDE SEQUENCE [LARGE SCALE GENOMIC DNA]</scope>
    <source>
        <strain>JH9</strain>
    </source>
</reference>
<organism>
    <name type="scientific">Staphylococcus aureus (strain JH9)</name>
    <dbReference type="NCBI Taxonomy" id="359786"/>
    <lineage>
        <taxon>Bacteria</taxon>
        <taxon>Bacillati</taxon>
        <taxon>Bacillota</taxon>
        <taxon>Bacilli</taxon>
        <taxon>Bacillales</taxon>
        <taxon>Staphylococcaceae</taxon>
        <taxon>Staphylococcus</taxon>
    </lineage>
</organism>
<name>RL17_STAA9</name>
<evidence type="ECO:0000255" key="1">
    <source>
        <dbReference type="HAMAP-Rule" id="MF_01368"/>
    </source>
</evidence>
<evidence type="ECO:0000305" key="2"/>
<feature type="chain" id="PRO_1000087198" description="Large ribosomal subunit protein bL17">
    <location>
        <begin position="1"/>
        <end position="122"/>
    </location>
</feature>
<gene>
    <name evidence="1" type="primary">rplQ</name>
    <name type="ordered locus">SaurJH9_2250</name>
</gene>
<dbReference type="EMBL" id="CP000703">
    <property type="protein sequence ID" value="ABQ50030.1"/>
    <property type="molecule type" value="Genomic_DNA"/>
</dbReference>
<dbReference type="RefSeq" id="WP_000542274.1">
    <property type="nucleotide sequence ID" value="NC_009487.1"/>
</dbReference>
<dbReference type="SMR" id="A5IV07"/>
<dbReference type="GeneID" id="98346535"/>
<dbReference type="KEGG" id="saj:SaurJH9_2250"/>
<dbReference type="HOGENOM" id="CLU_074407_2_2_9"/>
<dbReference type="GO" id="GO:0022625">
    <property type="term" value="C:cytosolic large ribosomal subunit"/>
    <property type="evidence" value="ECO:0007669"/>
    <property type="project" value="TreeGrafter"/>
</dbReference>
<dbReference type="GO" id="GO:0003735">
    <property type="term" value="F:structural constituent of ribosome"/>
    <property type="evidence" value="ECO:0007669"/>
    <property type="project" value="InterPro"/>
</dbReference>
<dbReference type="GO" id="GO:0006412">
    <property type="term" value="P:translation"/>
    <property type="evidence" value="ECO:0007669"/>
    <property type="project" value="UniProtKB-UniRule"/>
</dbReference>
<dbReference type="FunFam" id="3.90.1030.10:FF:000002">
    <property type="entry name" value="50S ribosomal protein L17"/>
    <property type="match status" value="1"/>
</dbReference>
<dbReference type="Gene3D" id="3.90.1030.10">
    <property type="entry name" value="Ribosomal protein L17"/>
    <property type="match status" value="1"/>
</dbReference>
<dbReference type="HAMAP" id="MF_01368">
    <property type="entry name" value="Ribosomal_bL17"/>
    <property type="match status" value="1"/>
</dbReference>
<dbReference type="InterPro" id="IPR000456">
    <property type="entry name" value="Ribosomal_bL17"/>
</dbReference>
<dbReference type="InterPro" id="IPR047859">
    <property type="entry name" value="Ribosomal_bL17_CS"/>
</dbReference>
<dbReference type="InterPro" id="IPR036373">
    <property type="entry name" value="Ribosomal_bL17_sf"/>
</dbReference>
<dbReference type="NCBIfam" id="TIGR00059">
    <property type="entry name" value="L17"/>
    <property type="match status" value="1"/>
</dbReference>
<dbReference type="PANTHER" id="PTHR14413:SF16">
    <property type="entry name" value="LARGE RIBOSOMAL SUBUNIT PROTEIN BL17M"/>
    <property type="match status" value="1"/>
</dbReference>
<dbReference type="PANTHER" id="PTHR14413">
    <property type="entry name" value="RIBOSOMAL PROTEIN L17"/>
    <property type="match status" value="1"/>
</dbReference>
<dbReference type="Pfam" id="PF01196">
    <property type="entry name" value="Ribosomal_L17"/>
    <property type="match status" value="1"/>
</dbReference>
<dbReference type="SUPFAM" id="SSF64263">
    <property type="entry name" value="Prokaryotic ribosomal protein L17"/>
    <property type="match status" value="1"/>
</dbReference>
<dbReference type="PROSITE" id="PS01167">
    <property type="entry name" value="RIBOSOMAL_L17"/>
    <property type="match status" value="1"/>
</dbReference>
<comment type="subunit">
    <text evidence="1">Part of the 50S ribosomal subunit. Contacts protein L32.</text>
</comment>
<comment type="similarity">
    <text evidence="1">Belongs to the bacterial ribosomal protein bL17 family.</text>
</comment>
<keyword id="KW-0687">Ribonucleoprotein</keyword>
<keyword id="KW-0689">Ribosomal protein</keyword>
<accession>A5IV07</accession>